<protein>
    <recommendedName>
        <fullName evidence="1">Protein FixA</fullName>
    </recommendedName>
</protein>
<sequence length="256" mass="27158">MKIITCYKCVPDEQDIAVNNADGSLDFSKADAKISQYDLNAIEAACQLKQQAAEAQVTALSVGGKALTNAKGRKDVLSRGPDELIVVIDDQFEQALPQQTASALAAAAQKAGFDLILCGDGSSDLYAQQVGLLVGEILNIPAVNGVSKIISLTADTLTVERELEDETETLSIPLPAVVAVSTDINSPQIPSMKAILGAAKKPVQVWSAADIGFNAVDAWSEQQVAAPKQRERQRIVIEGDGEEQIAAFAENLRKVI</sequence>
<reference key="1">
    <citation type="journal article" date="2006" name="BMC Genomics">
        <title>Complete genome sequence of Shigella flexneri 5b and comparison with Shigella flexneri 2a.</title>
        <authorList>
            <person name="Nie H."/>
            <person name="Yang F."/>
            <person name="Zhang X."/>
            <person name="Yang J."/>
            <person name="Chen L."/>
            <person name="Wang J."/>
            <person name="Xiong Z."/>
            <person name="Peng J."/>
            <person name="Sun L."/>
            <person name="Dong J."/>
            <person name="Xue Y."/>
            <person name="Xu X."/>
            <person name="Chen S."/>
            <person name="Yao Z."/>
            <person name="Shen Y."/>
            <person name="Jin Q."/>
        </authorList>
    </citation>
    <scope>NUCLEOTIDE SEQUENCE [LARGE SCALE GENOMIC DNA]</scope>
    <source>
        <strain>8401</strain>
    </source>
</reference>
<accession>Q0T8F3</accession>
<organism>
    <name type="scientific">Shigella flexneri serotype 5b (strain 8401)</name>
    <dbReference type="NCBI Taxonomy" id="373384"/>
    <lineage>
        <taxon>Bacteria</taxon>
        <taxon>Pseudomonadati</taxon>
        <taxon>Pseudomonadota</taxon>
        <taxon>Gammaproteobacteria</taxon>
        <taxon>Enterobacterales</taxon>
        <taxon>Enterobacteriaceae</taxon>
        <taxon>Shigella</taxon>
    </lineage>
</organism>
<proteinExistence type="inferred from homology"/>
<comment type="function">
    <text evidence="1">Required for anaerobic carnitine reduction. May bring reductant to CaiA.</text>
</comment>
<comment type="pathway">
    <text evidence="1">Amine and polyamine metabolism; carnitine metabolism.</text>
</comment>
<comment type="subunit">
    <text evidence="1">Heterodimer of FixA and FixB.</text>
</comment>
<comment type="similarity">
    <text evidence="1">Belongs to the ETF beta-subunit/FixA family.</text>
</comment>
<gene>
    <name evidence="1" type="primary">fixA</name>
    <name type="ordered locus">SFV_0035</name>
</gene>
<dbReference type="EMBL" id="CP000266">
    <property type="protein sequence ID" value="ABF02323.1"/>
    <property type="molecule type" value="Genomic_DNA"/>
</dbReference>
<dbReference type="RefSeq" id="WP_000692206.1">
    <property type="nucleotide sequence ID" value="NC_008258.1"/>
</dbReference>
<dbReference type="SMR" id="Q0T8F3"/>
<dbReference type="KEGG" id="sfv:SFV_0035"/>
<dbReference type="HOGENOM" id="CLU_060196_2_2_6"/>
<dbReference type="UniPathway" id="UPA00117"/>
<dbReference type="Proteomes" id="UP000000659">
    <property type="component" value="Chromosome"/>
</dbReference>
<dbReference type="GO" id="GO:0009055">
    <property type="term" value="F:electron transfer activity"/>
    <property type="evidence" value="ECO:0007669"/>
    <property type="project" value="InterPro"/>
</dbReference>
<dbReference type="GO" id="GO:0009437">
    <property type="term" value="P:carnitine metabolic process"/>
    <property type="evidence" value="ECO:0007669"/>
    <property type="project" value="UniProtKB-UniRule"/>
</dbReference>
<dbReference type="CDD" id="cd01714">
    <property type="entry name" value="ETF_beta"/>
    <property type="match status" value="1"/>
</dbReference>
<dbReference type="FunFam" id="3.40.50.620:FF:000072">
    <property type="entry name" value="Protein FixA homolog"/>
    <property type="match status" value="1"/>
</dbReference>
<dbReference type="Gene3D" id="3.40.50.620">
    <property type="entry name" value="HUPs"/>
    <property type="match status" value="1"/>
</dbReference>
<dbReference type="HAMAP" id="MF_01055">
    <property type="entry name" value="FixA"/>
    <property type="match status" value="1"/>
</dbReference>
<dbReference type="InterPro" id="IPR000049">
    <property type="entry name" value="ET-Flavoprotein_bsu_CS"/>
</dbReference>
<dbReference type="InterPro" id="IPR014730">
    <property type="entry name" value="ETF_a/b_N"/>
</dbReference>
<dbReference type="InterPro" id="IPR012255">
    <property type="entry name" value="ETF_b"/>
</dbReference>
<dbReference type="InterPro" id="IPR033948">
    <property type="entry name" value="ETF_beta_N"/>
</dbReference>
<dbReference type="InterPro" id="IPR023463">
    <property type="entry name" value="FixA"/>
</dbReference>
<dbReference type="InterPro" id="IPR014729">
    <property type="entry name" value="Rossmann-like_a/b/a_fold"/>
</dbReference>
<dbReference type="NCBIfam" id="NF002888">
    <property type="entry name" value="PRK03359.1"/>
    <property type="match status" value="1"/>
</dbReference>
<dbReference type="PANTHER" id="PTHR21294">
    <property type="entry name" value="ELECTRON TRANSFER FLAVOPROTEIN BETA-SUBUNIT"/>
    <property type="match status" value="1"/>
</dbReference>
<dbReference type="PANTHER" id="PTHR21294:SF17">
    <property type="entry name" value="PROTEIN FIXA"/>
    <property type="match status" value="1"/>
</dbReference>
<dbReference type="Pfam" id="PF01012">
    <property type="entry name" value="ETF"/>
    <property type="match status" value="1"/>
</dbReference>
<dbReference type="PIRSF" id="PIRSF000090">
    <property type="entry name" value="Beta-ETF"/>
    <property type="match status" value="1"/>
</dbReference>
<dbReference type="SMART" id="SM00893">
    <property type="entry name" value="ETF"/>
    <property type="match status" value="1"/>
</dbReference>
<dbReference type="SUPFAM" id="SSF52402">
    <property type="entry name" value="Adenine nucleotide alpha hydrolases-like"/>
    <property type="match status" value="1"/>
</dbReference>
<dbReference type="PROSITE" id="PS01065">
    <property type="entry name" value="ETF_BETA"/>
    <property type="match status" value="1"/>
</dbReference>
<keyword id="KW-0249">Electron transport</keyword>
<keyword id="KW-0813">Transport</keyword>
<feature type="chain" id="PRO_0000300969" description="Protein FixA">
    <location>
        <begin position="1"/>
        <end position="256"/>
    </location>
</feature>
<name>FIXA_SHIF8</name>
<evidence type="ECO:0000255" key="1">
    <source>
        <dbReference type="HAMAP-Rule" id="MF_01055"/>
    </source>
</evidence>